<sequence>MGAQVSTQKTGAHETLLEAAHGATINYTNINYYKDAASNSANRQDFSQDPGKFTEPVKDLMIKSMPALNSPSAEECGFSDRVRSLTLGNSTITTQESANVVVGYGRWPDYLADDQATAEDQPTQPDVATCRFYTLESVSWQSGSAGWWWKFPEALKDMGLFGQNMYYHYLGRAGYTIHVQCNASKFHQGCLLVVCVPEAEMGCADVTSVVTALNLINGEDAHTFSPSEATAEAGKVQTAVCNAGMGVAVGNLTIFPHQWINLRTNNCATIVMPYINSVPMDNMFRHYNFTLMVIPFAPLASQGGSTYVPITITIAPMCAEYNGLRLSTQPQGLPVMNTPGSNQFLTSDDFQSPCAMPEFDVTPPMDIPGEVRNIMEIAEVDSVVPVNNMSSKVKTIEAYQIPVSVGTTVRGDAIFSFQLNPGNSPVLNRTLLGEIINYYAHWSGSIKLTFLFCGSAMATGKLLLAYSPPGASVPTSRKDAMLGTHIIWDLGLQSSCVLCVPWISQTHYRMVQQDEYSAAGYITCWYQTNIIVPPDTPTDCIVLCFVSACNDFSVRMLKDTPFVEQEADLQGDSEHAVESAVSRVADTIMSGPSNSQQVPALTAVETGHTSQVVPSDTIQTRHVQNFHSRSESTIENFLSRSACVHIANYNAKGDKTDVNRFDRWEINIREMVQLRRKCEMFTYLRFDIEVTFVITSKQDQGPKLNQDMPVLTHQIMYVPPGGSVPSTVESYAWQTSTNPSVFWTEGNAPARMSIPFISIGNAYSSFYDGWSHFTQKGVYGYNTLNKMGQLFVRHVNKETPTPVTSTIRVYFKPKHIRAWVPRPPRLCPYVNKTNVNFITTQVTEPRNDLNDVPKSEHNMHTYGAFGQQSGAVYVGNYRVVNRHLATHNDWQNCVWEDYNRDLLVSTTTAQGCDTIARCHCTTGVYFCSSRNRHYPVSFEGPGLVEVQESEYYPKRYQSHVLLAAGFSEPGDCGGILRCEHGVIGIVTMGGEGVVGFADVRDLLWLEDDAMEQGVKDYVEQLGNAFGSGFTNQICEQVNLLKESLVGQDSILEKSLKALVKIISALVIVVRNHDDLITVTATLALIGCTSSPWRWLKQKVSQYYGIPMAERQNNGWLKKFTEMTNACKGMEWIAIKIQKFIEWLKVKILPEVKEKHEFLNRLKQLPLLESQIATIEQSAPSQSDQEQLFSNVQYFAHYCRKYAPLYAAEAKRVFSLEKKMSNYIQFKSKCRIEPVCLLLHGSPGAGKSVATNLIGRSLAEKLNSSVYSLPPDPDHFDGYKQQAVVIMDDLCQNPDGKDVSLFCQMVSSVDFVPPMAALEEKGILFTSPFVLASTNAGSINAPTVSDSRALARRFHFDMNIEVISMYSQNGKINMPMSVKTCDEECCPVNFKKCCPLVCGKAIQFIDRRTQVRYSLDMLVTEMFREYNHRHSVGATLEALFQGPPLYREIKISVAPETPPPPAIADLLKSVDSEAVREYCKEKGWLVPEINSTLQIEKHVSRAFICLQALTTFVSVAGIIYIIYKLFAGFQGAYTGMPNQKPKVPTLRQAKVQGPAFEFAVAMMKRNSSTVKTEYGEFTMLGIYDRWAVLPRHAKPGPTILMNDQEVGVLDAKELVDKDGTNLELTLLKLNRNEKFRDIRGFLAKEEVEVNEAVLAINTSKFPNMYIPVGQVTDYGFLNLGGTPTKRMLMYNFPTRAGQCGGVLMSTGKVLGIHVGGNGHQGFSAALLKHYFNDEQGEIEFIESSKDAGFPIINTPSKTKLEPSVFHQVFEGNKEPAVLRSGDPRLKANFEEAIFSKYIGNVNTHVDEYMMEAVDHYAGQLATLDISTEPMKLEDAVYGTEGLEALDLTTSAGYPYVALGIKKRDILSKRTKDLTKLKECMDKYGLNLPMVTYVKDELRSAEKVAKGKSRLIEASSLNDSVAMRQTFGNLYKTFHLNPGIVTGSAVGCDPDLFWSKIPVMLDGHLIAFDYSGYDASLSPVWFACLKMLLEKLGYTHKETNYIDYLCNSHHLYRDKHYFVRGGMPSGCSGTSIFNSMINNIIIRTLMLKVYKGIDLDQFRMIAYGDDVIASYPWPIDASLLAEAGKDYGLIMTPADKGECFNEVTWTNVTFLKRYFRADEQYPFLVHPVMPMKDIHESIRWTKDPKNTQDHVRSLCLLAWHNGEHEYEEFIRKIRSVPVGRCLTLPAFSTLRRKWLDSF</sequence>
<protein>
    <recommendedName>
        <fullName>Genome polyprotein</fullName>
    </recommendedName>
    <component>
        <recommendedName>
            <fullName>P1</fullName>
        </recommendedName>
    </component>
    <component>
        <recommendedName>
            <fullName>Capsid protein VP0</fullName>
        </recommendedName>
        <alternativeName>
            <fullName>VP4-VP2</fullName>
        </alternativeName>
    </component>
    <component>
        <recommendedName>
            <fullName>Capsid protein VP4</fullName>
        </recommendedName>
        <alternativeName>
            <fullName>P1A</fullName>
        </alternativeName>
        <alternativeName>
            <fullName>Virion protein 4</fullName>
        </alternativeName>
    </component>
    <component>
        <recommendedName>
            <fullName>Capsid protein VP2</fullName>
        </recommendedName>
        <alternativeName>
            <fullName>P1B</fullName>
        </alternativeName>
        <alternativeName>
            <fullName>Virion protein 2</fullName>
        </alternativeName>
    </component>
    <component>
        <recommendedName>
            <fullName>Capsid protein VP3</fullName>
        </recommendedName>
        <alternativeName>
            <fullName>P1C</fullName>
        </alternativeName>
        <alternativeName>
            <fullName>Virion protein 3</fullName>
        </alternativeName>
    </component>
    <component>
        <recommendedName>
            <fullName>Capsid protein VP1</fullName>
        </recommendedName>
        <alternativeName>
            <fullName>P1D</fullName>
        </alternativeName>
        <alternativeName>
            <fullName>Virion protein 1</fullName>
        </alternativeName>
    </component>
    <component>
        <recommendedName>
            <fullName>P2</fullName>
        </recommendedName>
    </component>
    <component>
        <recommendedName>
            <fullName>Protease 2A</fullName>
            <shortName>P2A</shortName>
            <ecNumber evidence="2">3.4.22.29</ecNumber>
        </recommendedName>
        <alternativeName>
            <fullName>Picornain 2A</fullName>
        </alternativeName>
        <alternativeName>
            <fullName>Protein 2A</fullName>
        </alternativeName>
    </component>
    <component>
        <recommendedName>
            <fullName>Protein 2B</fullName>
            <shortName>P2B</shortName>
        </recommendedName>
    </component>
    <component>
        <recommendedName>
            <fullName>Protein 2C</fullName>
            <shortName>P2C</shortName>
            <ecNumber evidence="2">3.6.1.15</ecNumber>
        </recommendedName>
    </component>
    <component>
        <recommendedName>
            <fullName>P3</fullName>
        </recommendedName>
    </component>
    <component>
        <recommendedName>
            <fullName>Protein 3AB</fullName>
        </recommendedName>
    </component>
    <component>
        <recommendedName>
            <fullName>Protein 3A</fullName>
            <shortName>P3A</shortName>
        </recommendedName>
    </component>
    <component>
        <recommendedName>
            <fullName>Viral protein genome-linked</fullName>
            <shortName>VPg</shortName>
        </recommendedName>
        <alternativeName>
            <fullName>Protein 3B</fullName>
            <shortName>P3B</shortName>
        </alternativeName>
    </component>
    <component>
        <recommendedName>
            <fullName>Protein 3CD</fullName>
            <ecNumber>3.4.22.28</ecNumber>
        </recommendedName>
    </component>
    <component>
        <recommendedName>
            <fullName evidence="12">Protease 3C</fullName>
            <ecNumber evidence="12">3.4.22.28</ecNumber>
        </recommendedName>
        <alternativeName>
            <fullName evidence="12">Picornain 3C</fullName>
            <shortName evidence="12">P3C</shortName>
        </alternativeName>
    </component>
    <component>
        <recommendedName>
            <fullName evidence="10">RNA-directed RNA polymerase</fullName>
            <shortName>RdRp</shortName>
            <ecNumber evidence="10">2.7.7.48</ecNumber>
        </recommendedName>
        <alternativeName>
            <fullName>3D polymerase</fullName>
            <shortName>3Dpol</shortName>
        </alternativeName>
        <alternativeName>
            <fullName>Protein 3D</fullName>
            <shortName>3D</shortName>
        </alternativeName>
    </component>
</protein>
<keyword id="KW-1072">Activation of host autophagy by virus</keyword>
<keyword id="KW-0067">ATP-binding</keyword>
<keyword id="KW-0068">Autocatalytic cleavage</keyword>
<keyword id="KW-0167">Capsid protein</keyword>
<keyword id="KW-0191">Covalent protein-RNA linkage</keyword>
<keyword id="KW-0235">DNA replication</keyword>
<keyword id="KW-1262">Eukaryotic host gene expression shutoff by virus</keyword>
<keyword id="KW-1193">Eukaryotic host translation shutoff by virus</keyword>
<keyword id="KW-0347">Helicase</keyword>
<keyword id="KW-1035">Host cytoplasm</keyword>
<keyword id="KW-1036">Host cytoplasmic vesicle</keyword>
<keyword id="KW-1190">Host gene expression shutoff by virus</keyword>
<keyword id="KW-1043">Host membrane</keyword>
<keyword id="KW-1192">Host mRNA suppression by virus</keyword>
<keyword id="KW-1048">Host nucleus</keyword>
<keyword id="KW-0945">Host-virus interaction</keyword>
<keyword id="KW-0378">Hydrolase</keyword>
<keyword id="KW-1090">Inhibition of host innate immune response by virus</keyword>
<keyword id="KW-1099">Inhibition of host mRNA nuclear export by virus</keyword>
<keyword id="KW-1088">Inhibition of host RIG-I by virus</keyword>
<keyword id="KW-1113">Inhibition of host RLR pathway by virus</keyword>
<keyword id="KW-0407">Ion channel</keyword>
<keyword id="KW-0406">Ion transport</keyword>
<keyword id="KW-0449">Lipoprotein</keyword>
<keyword id="KW-0460">Magnesium</keyword>
<keyword id="KW-0472">Membrane</keyword>
<keyword id="KW-0479">Metal-binding</keyword>
<keyword id="KW-0519">Myristate</keyword>
<keyword id="KW-0547">Nucleotide-binding</keyword>
<keyword id="KW-0548">Nucleotidyltransferase</keyword>
<keyword id="KW-0597">Phosphoprotein</keyword>
<keyword id="KW-1172">Pore-mediated penetration of viral genome into host cell</keyword>
<keyword id="KW-0645">Protease</keyword>
<keyword id="KW-0677">Repeat</keyword>
<keyword id="KW-0694">RNA-binding</keyword>
<keyword id="KW-0696">RNA-directed RNA polymerase</keyword>
<keyword id="KW-1143">T=pseudo3 icosahedral capsid protein</keyword>
<keyword id="KW-0788">Thiol protease</keyword>
<keyword id="KW-0808">Transferase</keyword>
<keyword id="KW-0813">Transport</keyword>
<keyword id="KW-1161">Viral attachment to host cell</keyword>
<keyword id="KW-0899">Viral immunoevasion</keyword>
<keyword id="KW-1182">Viral ion channel</keyword>
<keyword id="KW-1162">Viral penetration into host cytoplasm</keyword>
<keyword id="KW-0693">Viral RNA replication</keyword>
<keyword id="KW-0946">Virion</keyword>
<keyword id="KW-1164">Virus endocytosis by host</keyword>
<keyword id="KW-1160">Virus entry into host cell</keyword>
<keyword id="KW-0862">Zinc</keyword>
<keyword id="KW-0863">Zinc-finger</keyword>
<comment type="function">
    <molecule>Capsid protein VP1</molecule>
    <text evidence="2">Forms an icosahedral capsid of pseudo T=3 symmetry with capsid proteins VP2 and VP3 (By similarity). The capsid is 300 Angstroms in diameter, composed of 60 copies of each capsid protein and enclosing the viral positive strand RNA genome (By similarity). Capsid protein VP1 mainly forms the vertices of the capsid (By similarity). Capsid protein VP1 interacts with host cell receptor to provide virion attachment to target host cells (By similarity). This attachment induces virion internalization (By similarity). Tyrosine kinases are probably involved in the entry process (By similarity). After binding to its receptor, the capsid undergoes conformational changes (By similarity). Capsid protein VP1 N-terminus (that contains an amphipathic alpha-helix) and capsid protein VP4 are externalized (By similarity). Together, they shape a pore in the host membrane through which viral genome is translocated to host cell cytoplasm (By similarity).</text>
</comment>
<comment type="function">
    <molecule>Capsid protein VP2</molecule>
    <text evidence="2">Forms an icosahedral capsid of pseudo T=3 symmetry with capsid proteins VP2 and VP3 (By similarity). The capsid is 300 Angstroms in diameter, composed of 60 copies of each capsid protein and enclosing the viral positive strand RNA genome (By similarity).</text>
</comment>
<comment type="function">
    <molecule>Capsid protein VP3</molecule>
    <text evidence="2">Forms an icosahedral capsid of pseudo T=3 symmetry with capsid proteins VP2 and VP3 (By similarity). The capsid is 300 Angstroms in diameter, composed of 60 copies of each capsid protein and enclosing the viral positive strand RNA genome (By similarity).</text>
</comment>
<comment type="function">
    <molecule>Capsid protein VP4</molecule>
    <text evidence="2">Lies on the inner surface of the capsid shell (By similarity). After binding to the host receptor, the capsid undergoes conformational changes (By similarity). Capsid protein VP4 is released, Capsid protein VP1 N-terminus is externalized, and together, they shape a pore in the host membrane through which the viral genome is translocated into the host cell cytoplasm (By similarity).</text>
</comment>
<comment type="function">
    <molecule>Capsid protein VP0</molecule>
    <text evidence="2">Component of immature procapsids, which is cleaved into capsid proteins VP4 and VP2 after maturation (By similarity). Allows the capsid to remain inactive before the maturation step (By similarity).</text>
</comment>
<comment type="function">
    <molecule>Protease 2A</molecule>
    <text evidence="2 3">Cysteine protease that cleaves viral polyprotein and specific host proteins (By similarity). It is responsible for the autocatalytic cleavage between the P1 and P2 regions, which is the first cleavage occurring in the polyprotein (By similarity). Also cleaves the host translation initiation factor EIF4G1, in order to shut down the capped cellular mRNA translation (By similarity). Inhibits the host nucleus-cytoplasm protein and RNA trafficking by cleaving host members of the nuclear pores (By similarity). Counteracts stress granule formation probably by antagonizing its assembly or promoting its dissassembly (By similarity).</text>
</comment>
<comment type="function">
    <molecule>Protein 2B</molecule>
    <text evidence="2">Plays an essential role in the virus replication cycle by acting as a viroporin. Creates a pore in the host endoplasmic reticulum and as a consequence releases Ca2+ in the cytoplasm of infected cell. In turn, high levels of cytoplasmic calcium may trigger membrane trafficking and transport of viral ER-associated proteins to viroplasms, sites of viral genome replication.</text>
</comment>
<comment type="function">
    <molecule>Protein 2C</molecule>
    <text evidence="2">Induces and associates with structural rearrangements of intracellular membranes. Displays RNA-binding, nucleotide binding and NTPase activities. May play a role in virion morphogenesis and viral RNA encapsidation by interacting with the capsid protein VP3.</text>
</comment>
<comment type="function">
    <molecule>Protein 3AB</molecule>
    <text evidence="2">Localizes the viral replication complex to the surface of membranous vesicles. Together with protein 3CD binds the Cis-Active RNA Element (CRE) which is involved in RNA synthesis initiation. Acts as a cofactor to stimulate the activity of 3D polymerase, maybe through a nucleid acid chaperone activity.</text>
</comment>
<comment type="function">
    <molecule>Protein 3A</molecule>
    <text evidence="2 5">Localizes the viral replication complex to the surface of membranous vesicles (By similarity). It inhibits host cell endoplasmic reticulum-to-Golgi apparatus transport and causes the disassembly of the Golgi complex, possibly through GBF1 interaction (By similarity). This would result in depletion of MHC, trail receptors and IFN receptors at the host cell surface (By similarity). Plays an essential role in viral RNA replication by recruiting ACBD3 and PI4KB at the viral replication sites, thereby allowing the formation of the rearranged membranous structures where viral replication takes place (By similarity).</text>
</comment>
<comment type="function">
    <molecule>Viral protein genome-linked</molecule>
    <text evidence="2">Acts as a primer for viral RNA replication and remains covalently bound to viral genomic RNA. VPg is uridylylated prior to priming replication into VPg-pUpU. The oriI viral genomic sequence may act as a template for this. The VPg-pUpU is then used as primer on the genomic RNA poly(A) by the RNA-dependent RNA polymerase to replicate the viral genome. During genome replication, the VPg-RNA linkage is removed by the host TDP2, thereby accelerating replication. During the late stage of the replication cycle, host TDP2 is excluded from sites of viral RNA synthesis and encapsidation, allowing for the generation of progeny virions.</text>
</comment>
<comment type="function">
    <molecule>Protein 3CD</molecule>
    <text evidence="2">Involved in the viral replication complex and viral polypeptide maturation. It exhibits protease activity with a specificity and catalytic efficiency that is different from protease 3C. Protein 3CD lacks polymerase activity. Protein 3CD binds to the 5'UTR of the viral genome.</text>
</comment>
<comment type="function">
    <molecule>RNA-directed RNA polymerase</molecule>
    <text evidence="2">Replicates the viral genomic RNA on the surface of intracellular membranes. May form linear arrays of subunits that propagate along a strong head-to-tail interaction called interface-I. Covalently attaches UMP to a tyrosine of VPg, which is used to prime RNA synthesis. The positive stranded RNA genome is first replicated at virus induced membranous vesicles, creating a dsRNA genomic replication form. This dsRNA is then used as template to synthesize positive stranded RNA genomes. ss(+)RNA genomes are either translated, replicated or encapsidated.</text>
</comment>
<comment type="function">
    <molecule>Protease 3C</molecule>
    <text evidence="2 4">Major viral protease that mediates proteolytic processing of the polyprotein (By similarity). Cleaves host EIF5B, contributing to host translation shutoff (By similarity). Also cleaves host PABPC1, contributing to host translation shutoff (By similarity). Cleaves host NLRP1, triggers host N-glycine-mediated degradation of the autoinhibitory NLRP1 N-terminal fragment (By similarity).</text>
</comment>
<comment type="catalytic activity">
    <molecule>Protein 2C</molecule>
    <reaction evidence="2">
        <text>a ribonucleoside 5'-triphosphate + H2O = a ribonucleoside 5'-diphosphate + phosphate + H(+)</text>
        <dbReference type="Rhea" id="RHEA:23680"/>
        <dbReference type="ChEBI" id="CHEBI:15377"/>
        <dbReference type="ChEBI" id="CHEBI:15378"/>
        <dbReference type="ChEBI" id="CHEBI:43474"/>
        <dbReference type="ChEBI" id="CHEBI:57930"/>
        <dbReference type="ChEBI" id="CHEBI:61557"/>
        <dbReference type="EC" id="3.6.1.15"/>
    </reaction>
</comment>
<comment type="catalytic activity">
    <molecule>Protease 2A</molecule>
    <reaction evidence="2">
        <text>Selective cleavage of Tyr-|-Gly bond in the picornavirus polyprotein.</text>
        <dbReference type="EC" id="3.4.22.29"/>
    </reaction>
</comment>
<comment type="catalytic activity">
    <molecule>RNA-directed RNA polymerase</molecule>
    <reaction evidence="10">
        <text>RNA(n) + a ribonucleoside 5'-triphosphate = RNA(n+1) + diphosphate</text>
        <dbReference type="Rhea" id="RHEA:21248"/>
        <dbReference type="Rhea" id="RHEA-COMP:14527"/>
        <dbReference type="Rhea" id="RHEA-COMP:17342"/>
        <dbReference type="ChEBI" id="CHEBI:33019"/>
        <dbReference type="ChEBI" id="CHEBI:61557"/>
        <dbReference type="ChEBI" id="CHEBI:140395"/>
        <dbReference type="EC" id="2.7.7.48"/>
    </reaction>
</comment>
<comment type="catalytic activity">
    <molecule>Protease 3C</molecule>
    <reaction evidence="12">
        <text>Selective cleavage of Gln-|-Gly bond in the poliovirus polyprotein. In other picornavirus reactions Glu may be substituted for Gln, and Ser or Thr for Gly.</text>
        <dbReference type="EC" id="3.4.22.28"/>
    </reaction>
</comment>
<comment type="cofactor">
    <molecule>RNA-directed RNA polymerase</molecule>
    <cofactor evidence="2">
        <name>Mg(2+)</name>
        <dbReference type="ChEBI" id="CHEBI:18420"/>
    </cofactor>
    <text evidence="2 5">Binds 2 magnesium ions that constitute a dinuclear catalytic metal center (By similarity). The magnesium ions are not prebound but only present for catalysis (By similarity). Requires the presence of 3CDpro or 3CPro (By similarity).</text>
</comment>
<comment type="activity regulation">
    <molecule>RNA-directed RNA polymerase</molecule>
    <text evidence="2">Replication or transcription is subject to high level of random mutations by the nucleotide analog ribavirin.</text>
</comment>
<comment type="subunit">
    <molecule>Capsid protein VP0</molecule>
    <text evidence="2">Interacts with capsid protein VP1 and capsid protein VP3 to form heterotrimeric protomers.</text>
</comment>
<comment type="subunit">
    <molecule>Capsid protein VP1</molecule>
    <text evidence="2">Interacts with capsid protein VP0, and capsid protein VP3 to form heterotrimeric protomers (By similarity). Five protomers subsequently associate to form pentamers which serve as building blocks for the capsid (By similarity). Interacts with capsid protein VP2, capsid protein VP3 and capsid protein VP4 following cleavage of capsid protein VP0 (By similarity).</text>
</comment>
<comment type="subunit">
    <molecule>Capsid protein VP2</molecule>
    <text evidence="2">Interacts with capsid protein VP1 and capsid protein VP3 in the mature capsid.</text>
</comment>
<comment type="subunit">
    <molecule>Capsid protein VP3</molecule>
    <text evidence="2">Interacts with capsid protein VP0 and capsid protein VP1 to form heterotrimeric protomers (By similarity). Five protomers subsequently associate to form pentamers which serve as building blocks for the capsid (By similarity). Interacts with capsid protein VP4 in the mature capsid (By similarity). Interacts with protein 2C; this interaction may be important for virion morphogenesis (By similarity).</text>
</comment>
<comment type="subunit">
    <molecule>Capsid protein VP4</molecule>
    <text evidence="2">Interacts with capsid protein VP1 and capsid protein VP3.</text>
</comment>
<comment type="subunit">
    <molecule>Protease 2A</molecule>
    <text evidence="6">Homodimer.</text>
</comment>
<comment type="subunit">
    <molecule>Protein 2C</molecule>
    <text evidence="2">Homohexamer; forms a hexameric ring structure with 6-fold symmetry characteristic of AAA+ ATPases (By similarity). Interacts (via N-terminus) with host RTN3 (via reticulon domain); this interaction is important for viral replication (By similarity). Interacts with capsid protein VP3; this interaction may be important for virion morphogenesis (By similarity).</text>
</comment>
<comment type="subunit">
    <molecule>Protein 3AB</molecule>
    <text evidence="2">Interacts with protein 3CD.</text>
</comment>
<comment type="subunit">
    <molecule>Protein 3A</molecule>
    <text evidence="2">Homodimer (By similarity). Interacts with host GBF1 (By similarity). Interacts (via GOLD domain) with host ACBD3 (via GOLD domain); this interaction allows the formation of a viral protein 3A/ACBD3 heterotetramer with a 2:2 stoichiometry, which will stimulate the recruitment of host PI4KB in order to synthesize PI4P at the viral RNA replication sites (By similarity).</text>
</comment>
<comment type="subunit">
    <molecule>Viral protein genome-linked</molecule>
    <text evidence="2">Interacts with RNA-directed RNA polymerase.</text>
</comment>
<comment type="subunit">
    <molecule>Protein 3CD</molecule>
    <text evidence="2">Interacts with protein 3AB and with RNA-directed RNA polymerase.</text>
</comment>
<comment type="subunit">
    <molecule>RNA-directed RNA polymerase</molecule>
    <text evidence="2">Interacts with Viral protein genome-linked and with protein 3CD.</text>
</comment>
<comment type="subcellular location">
    <molecule>Capsid protein VP0</molecule>
    <subcellularLocation>
        <location>Virion</location>
    </subcellularLocation>
    <subcellularLocation>
        <location evidence="13">Host cytoplasm</location>
    </subcellularLocation>
</comment>
<comment type="subcellular location">
    <molecule>Capsid protein VP4</molecule>
    <subcellularLocation>
        <location>Virion</location>
    </subcellularLocation>
</comment>
<comment type="subcellular location">
    <molecule>Capsid protein VP2</molecule>
    <subcellularLocation>
        <location evidence="2">Virion</location>
    </subcellularLocation>
    <subcellularLocation>
        <location evidence="13">Host cytoplasm</location>
    </subcellularLocation>
</comment>
<comment type="subcellular location">
    <molecule>Capsid protein VP3</molecule>
    <subcellularLocation>
        <location evidence="2">Virion</location>
    </subcellularLocation>
    <subcellularLocation>
        <location evidence="13">Host cytoplasm</location>
    </subcellularLocation>
</comment>
<comment type="subcellular location">
    <molecule>Capsid protein VP1</molecule>
    <subcellularLocation>
        <location evidence="2">Virion</location>
    </subcellularLocation>
    <subcellularLocation>
        <location evidence="13">Host cytoplasm</location>
    </subcellularLocation>
</comment>
<comment type="subcellular location">
    <molecule>Protein 2B</molecule>
    <subcellularLocation>
        <location evidence="13">Host cytoplasmic vesicle membrane</location>
        <topology evidence="13">Peripheral membrane protein</topology>
        <orientation evidence="13">Cytoplasmic side</orientation>
    </subcellularLocation>
    <text>Probably localizes to the surface of intracellular membrane vesicles that are induced after virus infection as the site for viral RNA replication. These vesicles are derived from the endoplasmic reticulum.</text>
</comment>
<comment type="subcellular location">
    <molecule>Protein 2C</molecule>
    <subcellularLocation>
        <location evidence="13">Host cytoplasmic vesicle membrane</location>
        <topology evidence="13">Peripheral membrane protein</topology>
        <orientation evidence="13">Cytoplasmic side</orientation>
    </subcellularLocation>
    <text>Probably localizes to the surface of intracellular membrane vesicles that are induced after virus infection as the site for viral RNA replication. These vesicles are derived from the endoplasmic reticulum.</text>
</comment>
<comment type="subcellular location">
    <molecule>Protein 3A</molecule>
    <subcellularLocation>
        <location evidence="13">Host cytoplasmic vesicle membrane</location>
        <topology evidence="13">Peripheral membrane protein</topology>
        <orientation evidence="13">Cytoplasmic side</orientation>
    </subcellularLocation>
    <text>Probably localizes to the surface of intracellular membrane vesicles that are induced after virus infection as the site for viral RNA replication. These vesicles are derived from the endoplasmic reticulum.</text>
</comment>
<comment type="subcellular location">
    <molecule>Protein 3AB</molecule>
    <subcellularLocation>
        <location evidence="13">Host cytoplasmic vesicle membrane</location>
        <topology evidence="13">Peripheral membrane protein</topology>
        <orientation evidence="13">Cytoplasmic side</orientation>
    </subcellularLocation>
    <text>Probably localizes to the surface of intracellular membrane vesicles that are induced after virus infection as the site for viral RNA replication. These vesicles are derived from the endoplasmic reticulum.</text>
</comment>
<comment type="subcellular location">
    <molecule>Viral protein genome-linked</molecule>
    <subcellularLocation>
        <location evidence="2">Virion</location>
    </subcellularLocation>
    <subcellularLocation>
        <location evidence="7">Host cytoplasm</location>
    </subcellularLocation>
</comment>
<comment type="subcellular location">
    <molecule>Protease 3C</molecule>
    <subcellularLocation>
        <location>Host cytoplasm</location>
    </subcellularLocation>
</comment>
<comment type="subcellular location">
    <molecule>Protein 3CD</molecule>
    <subcellularLocation>
        <location evidence="2">Host nucleus</location>
    </subcellularLocation>
    <subcellularLocation>
        <location evidence="2">Host cytoplasm</location>
    </subcellularLocation>
    <subcellularLocation>
        <location evidence="13">Host cytoplasmic vesicle membrane</location>
        <topology evidence="13">Peripheral membrane protein</topology>
        <orientation evidence="13">Cytoplasmic side</orientation>
    </subcellularLocation>
    <text>Probably localizes to the surface of intracellular membrane vesicles that are induced after virus infection as the site for viral RNA replication. These vesicles are derived from the endoplasmic reticulum.</text>
</comment>
<comment type="subcellular location">
    <molecule>RNA-directed RNA polymerase</molecule>
    <subcellularLocation>
        <location evidence="13">Host cytoplasmic vesicle membrane</location>
        <topology evidence="13">Peripheral membrane protein</topology>
        <orientation evidence="13">Cytoplasmic side</orientation>
    </subcellularLocation>
    <text>Probably localizes to the surface of intracellular membrane vesicles that are induced after virus infection as the site for viral RNA replication. These vesicles are derived from the endoplasmic reticulum.</text>
</comment>
<comment type="domain">
    <molecule>Protein 2C</molecule>
    <text evidence="1 2">The N-terminus has membrane-binding (By similarity). The N-terminus also displays RNA-binding properties (By similarity). The N-terminus is involved in oligomerization (By similarity). The central part contains an ATPase domain and a degenerate C4-type zinc-finger with only 3 cysteines (By similarity). The C-terminus is involved in RNA-binding (By similarity). The extreme C-terminus contains a region involved in oligomerization (By similarity).</text>
</comment>
<comment type="PTM">
    <molecule>Genome polyprotein</molecule>
    <text evidence="2">Specific enzymatic cleavages in vivo by the viral proteases yield processing intermediates and the mature proteins.</text>
</comment>
<comment type="PTM">
    <molecule>Capsid protein VP0</molecule>
    <text evidence="2">Myristoylation is required for the formation of pentamers during virus assembly. Further assembly of 12 pentamers and a molecule of genomic RNA generates the provirion.</text>
</comment>
<comment type="PTM">
    <molecule>Capsid protein VP0</molecule>
    <text evidence="2">During virion maturation, immature virions are rendered infectious following cleavage of VP0 into VP4 and VP2. This maturation seems to be an autocatalytic event triggered by the presence of RNA in the capsid and it is followed by a conformational change infectious virion.</text>
</comment>
<comment type="PTM">
    <molecule>Capsid protein VP4</molecule>
    <text evidence="2">Myristoylation is required during RNA encapsidation and formation of the mature virus particle.</text>
</comment>
<comment type="PTM">
    <molecule>Viral protein genome-linked</molecule>
    <text evidence="2">VPg is uridylylated by the polymerase into VPg-pUpU. This acts as a nucleotide-peptide primer for the genomic RNA replication.</text>
</comment>
<comment type="similarity">
    <text evidence="13">Belongs to the picornaviruses polyprotein family.</text>
</comment>
<evidence type="ECO:0000250" key="1">
    <source>
        <dbReference type="UniProtKB" id="B9VUU3"/>
    </source>
</evidence>
<evidence type="ECO:0000250" key="2">
    <source>
        <dbReference type="UniProtKB" id="P03300"/>
    </source>
</evidence>
<evidence type="ECO:0000250" key="3">
    <source>
        <dbReference type="UniProtKB" id="P03301"/>
    </source>
</evidence>
<evidence type="ECO:0000250" key="4">
    <source>
        <dbReference type="UniProtKB" id="P03303"/>
    </source>
</evidence>
<evidence type="ECO:0000250" key="5">
    <source>
        <dbReference type="UniProtKB" id="P03313"/>
    </source>
</evidence>
<evidence type="ECO:0000250" key="6">
    <source>
        <dbReference type="UniProtKB" id="P04936"/>
    </source>
</evidence>
<evidence type="ECO:0000250" key="7">
    <source>
        <dbReference type="UniProtKB" id="Q66478"/>
    </source>
</evidence>
<evidence type="ECO:0000250" key="8">
    <source>
        <dbReference type="UniProtKB" id="Q9QF31"/>
    </source>
</evidence>
<evidence type="ECO:0000255" key="9"/>
<evidence type="ECO:0000255" key="10">
    <source>
        <dbReference type="PROSITE-ProRule" id="PRU00539"/>
    </source>
</evidence>
<evidence type="ECO:0000255" key="11">
    <source>
        <dbReference type="PROSITE-ProRule" id="PRU00551"/>
    </source>
</evidence>
<evidence type="ECO:0000255" key="12">
    <source>
        <dbReference type="PROSITE-ProRule" id="PRU01222"/>
    </source>
</evidence>
<evidence type="ECO:0000305" key="13"/>
<proteinExistence type="inferred from homology"/>
<accession>Q9YLJ1</accession>
<reference key="1">
    <citation type="journal article" date="1999" name="Virus Res.">
        <title>Echovirus 5: infectious transcripts and complete nucleotide sequence from uncloned cDNA.</title>
        <authorList>
            <person name="Lindberg A.M."/>
            <person name="Johansson S."/>
            <person name="Andersson A."/>
        </authorList>
    </citation>
    <scope>NUCLEOTIDE SEQUENCE [GENOMIC RNA]</scope>
</reference>
<name>POLG_EC05N</name>
<organismHost>
    <name type="scientific">Homo sapiens</name>
    <name type="common">Human</name>
    <dbReference type="NCBI Taxonomy" id="9606"/>
</organismHost>
<dbReference type="EC" id="3.4.22.29" evidence="2"/>
<dbReference type="EC" id="3.6.1.15" evidence="2"/>
<dbReference type="EC" id="3.4.22.28" evidence="12"/>
<dbReference type="EC" id="2.7.7.48" evidence="10"/>
<dbReference type="EMBL" id="AF083069">
    <property type="protein sequence ID" value="AAD19342.1"/>
    <property type="molecule type" value="Genomic_RNA"/>
</dbReference>
<dbReference type="SMR" id="Q9YLJ1"/>
<dbReference type="MEROPS" id="C03.011"/>
<dbReference type="MEROPS" id="N08.001"/>
<dbReference type="Proteomes" id="UP000008270">
    <property type="component" value="Segment"/>
</dbReference>
<dbReference type="GO" id="GO:0044162">
    <property type="term" value="C:host cell cytoplasmic vesicle membrane"/>
    <property type="evidence" value="ECO:0007669"/>
    <property type="project" value="UniProtKB-SubCell"/>
</dbReference>
<dbReference type="GO" id="GO:0042025">
    <property type="term" value="C:host cell nucleus"/>
    <property type="evidence" value="ECO:0007669"/>
    <property type="project" value="UniProtKB-SubCell"/>
</dbReference>
<dbReference type="GO" id="GO:0016020">
    <property type="term" value="C:membrane"/>
    <property type="evidence" value="ECO:0007669"/>
    <property type="project" value="UniProtKB-KW"/>
</dbReference>
<dbReference type="GO" id="GO:0039618">
    <property type="term" value="C:T=pseudo3 icosahedral viral capsid"/>
    <property type="evidence" value="ECO:0007669"/>
    <property type="project" value="UniProtKB-KW"/>
</dbReference>
<dbReference type="GO" id="GO:0005524">
    <property type="term" value="F:ATP binding"/>
    <property type="evidence" value="ECO:0007669"/>
    <property type="project" value="UniProtKB-KW"/>
</dbReference>
<dbReference type="GO" id="GO:0016887">
    <property type="term" value="F:ATP hydrolysis activity"/>
    <property type="evidence" value="ECO:0007669"/>
    <property type="project" value="InterPro"/>
</dbReference>
<dbReference type="GO" id="GO:0015267">
    <property type="term" value="F:channel activity"/>
    <property type="evidence" value="ECO:0007669"/>
    <property type="project" value="UniProtKB-KW"/>
</dbReference>
<dbReference type="GO" id="GO:0004197">
    <property type="term" value="F:cysteine-type endopeptidase activity"/>
    <property type="evidence" value="ECO:0007669"/>
    <property type="project" value="UniProtKB-EC"/>
</dbReference>
<dbReference type="GO" id="GO:0003723">
    <property type="term" value="F:RNA binding"/>
    <property type="evidence" value="ECO:0007669"/>
    <property type="project" value="UniProtKB-KW"/>
</dbReference>
<dbReference type="GO" id="GO:0003724">
    <property type="term" value="F:RNA helicase activity"/>
    <property type="evidence" value="ECO:0007669"/>
    <property type="project" value="InterPro"/>
</dbReference>
<dbReference type="GO" id="GO:0003968">
    <property type="term" value="F:RNA-directed RNA polymerase activity"/>
    <property type="evidence" value="ECO:0007669"/>
    <property type="project" value="UniProtKB-KW"/>
</dbReference>
<dbReference type="GO" id="GO:0005198">
    <property type="term" value="F:structural molecule activity"/>
    <property type="evidence" value="ECO:0007669"/>
    <property type="project" value="InterPro"/>
</dbReference>
<dbReference type="GO" id="GO:0008270">
    <property type="term" value="F:zinc ion binding"/>
    <property type="evidence" value="ECO:0007669"/>
    <property type="project" value="UniProtKB-KW"/>
</dbReference>
<dbReference type="GO" id="GO:0006260">
    <property type="term" value="P:DNA replication"/>
    <property type="evidence" value="ECO:0007669"/>
    <property type="project" value="UniProtKB-KW"/>
</dbReference>
<dbReference type="GO" id="GO:0006351">
    <property type="term" value="P:DNA-templated transcription"/>
    <property type="evidence" value="ECO:0007669"/>
    <property type="project" value="InterPro"/>
</dbReference>
<dbReference type="GO" id="GO:0075509">
    <property type="term" value="P:endocytosis involved in viral entry into host cell"/>
    <property type="evidence" value="ECO:0007669"/>
    <property type="project" value="UniProtKB-KW"/>
</dbReference>
<dbReference type="GO" id="GO:0034220">
    <property type="term" value="P:monoatomic ion transmembrane transport"/>
    <property type="evidence" value="ECO:0007669"/>
    <property type="project" value="UniProtKB-KW"/>
</dbReference>
<dbReference type="GO" id="GO:0006508">
    <property type="term" value="P:proteolysis"/>
    <property type="evidence" value="ECO:0007669"/>
    <property type="project" value="UniProtKB-KW"/>
</dbReference>
<dbReference type="GO" id="GO:0044694">
    <property type="term" value="P:symbiont genome entry into host cell via pore formation in plasma membrane"/>
    <property type="evidence" value="ECO:0007669"/>
    <property type="project" value="UniProtKB-KW"/>
</dbReference>
<dbReference type="GO" id="GO:0039520">
    <property type="term" value="P:symbiont-mediated activation of host autophagy"/>
    <property type="evidence" value="ECO:0000250"/>
    <property type="project" value="UniProtKB"/>
</dbReference>
<dbReference type="GO" id="GO:0039540">
    <property type="term" value="P:symbiont-mediated suppression of host cytoplasmic pattern recognition receptor signaling pathway via inhibition of RIG-I activity"/>
    <property type="evidence" value="ECO:0007669"/>
    <property type="project" value="UniProtKB-KW"/>
</dbReference>
<dbReference type="GO" id="GO:0039522">
    <property type="term" value="P:symbiont-mediated suppression of host mRNA export from nucleus"/>
    <property type="evidence" value="ECO:0007669"/>
    <property type="project" value="UniProtKB-KW"/>
</dbReference>
<dbReference type="GO" id="GO:0039606">
    <property type="term" value="P:symbiont-mediated suppression of host translation initiation"/>
    <property type="evidence" value="ECO:0000250"/>
    <property type="project" value="UniProtKB"/>
</dbReference>
<dbReference type="GO" id="GO:0039694">
    <property type="term" value="P:viral RNA genome replication"/>
    <property type="evidence" value="ECO:0007669"/>
    <property type="project" value="InterPro"/>
</dbReference>
<dbReference type="GO" id="GO:0019062">
    <property type="term" value="P:virion attachment to host cell"/>
    <property type="evidence" value="ECO:0007669"/>
    <property type="project" value="UniProtKB-KW"/>
</dbReference>
<dbReference type="CDD" id="cd23213">
    <property type="entry name" value="Enterovirus_RdRp"/>
    <property type="match status" value="1"/>
</dbReference>
<dbReference type="CDD" id="cd00205">
    <property type="entry name" value="rhv_like"/>
    <property type="match status" value="3"/>
</dbReference>
<dbReference type="FunFam" id="1.20.960.20:FF:000001">
    <property type="entry name" value="Genome polyprotein"/>
    <property type="match status" value="1"/>
</dbReference>
<dbReference type="FunFam" id="2.40.10.10:FF:000018">
    <property type="entry name" value="Genome polyprotein"/>
    <property type="match status" value="1"/>
</dbReference>
<dbReference type="FunFam" id="2.40.10.10:FF:000020">
    <property type="entry name" value="Genome polyprotein"/>
    <property type="match status" value="1"/>
</dbReference>
<dbReference type="FunFam" id="2.40.10.10:FF:000022">
    <property type="entry name" value="Genome polyprotein"/>
    <property type="match status" value="1"/>
</dbReference>
<dbReference type="FunFam" id="2.60.120.20:FF:000001">
    <property type="entry name" value="Genome polyprotein"/>
    <property type="match status" value="1"/>
</dbReference>
<dbReference type="FunFam" id="2.60.120.20:FF:000002">
    <property type="entry name" value="Genome polyprotein"/>
    <property type="match status" value="1"/>
</dbReference>
<dbReference type="FunFam" id="2.60.120.20:FF:000004">
    <property type="entry name" value="Genome polyprotein"/>
    <property type="match status" value="1"/>
</dbReference>
<dbReference type="FunFam" id="3.30.70.270:FF:000008">
    <property type="entry name" value="Genome polyprotein"/>
    <property type="match status" value="1"/>
</dbReference>
<dbReference type="FunFam" id="4.10.80.10:FF:000001">
    <property type="entry name" value="Genome polyprotein"/>
    <property type="match status" value="1"/>
</dbReference>
<dbReference type="FunFam" id="4.10.880.10:FF:000001">
    <property type="entry name" value="Genome polyprotein"/>
    <property type="match status" value="1"/>
</dbReference>
<dbReference type="FunFam" id="4.10.880.10:FF:000002">
    <property type="entry name" value="Genome polyprotein"/>
    <property type="match status" value="1"/>
</dbReference>
<dbReference type="Gene3D" id="1.20.960.20">
    <property type="match status" value="1"/>
</dbReference>
<dbReference type="Gene3D" id="2.60.120.20">
    <property type="match status" value="3"/>
</dbReference>
<dbReference type="Gene3D" id="3.30.70.270">
    <property type="match status" value="1"/>
</dbReference>
<dbReference type="Gene3D" id="4.10.80.10">
    <property type="entry name" value="Picornavirus coat protein VP4"/>
    <property type="match status" value="1"/>
</dbReference>
<dbReference type="Gene3D" id="6.10.20.20">
    <property type="entry name" value="Poliovirus 3A protein-like"/>
    <property type="match status" value="1"/>
</dbReference>
<dbReference type="Gene3D" id="4.10.880.10">
    <property type="entry name" value="Poliovirus 3D polymerase Domain 1 (Nucleotidyltransferase)"/>
    <property type="match status" value="2"/>
</dbReference>
<dbReference type="Gene3D" id="2.40.10.10">
    <property type="entry name" value="Trypsin-like serine proteases"/>
    <property type="match status" value="4"/>
</dbReference>
<dbReference type="InterPro" id="IPR003593">
    <property type="entry name" value="AAA+_ATPase"/>
</dbReference>
<dbReference type="InterPro" id="IPR043502">
    <property type="entry name" value="DNA/RNA_pol_sf"/>
</dbReference>
<dbReference type="InterPro" id="IPR000605">
    <property type="entry name" value="Helicase_SF3_ssDNA/RNA_vir"/>
</dbReference>
<dbReference type="InterPro" id="IPR014759">
    <property type="entry name" value="Helicase_SF3_ssRNA_vir"/>
</dbReference>
<dbReference type="InterPro" id="IPR027417">
    <property type="entry name" value="P-loop_NTPase"/>
</dbReference>
<dbReference type="InterPro" id="IPR014838">
    <property type="entry name" value="P3A"/>
</dbReference>
<dbReference type="InterPro" id="IPR036203">
    <property type="entry name" value="P3A_soluble_dom"/>
</dbReference>
<dbReference type="InterPro" id="IPR044067">
    <property type="entry name" value="PCV_3C_PRO"/>
</dbReference>
<dbReference type="InterPro" id="IPR000081">
    <property type="entry name" value="Peptidase_C3"/>
</dbReference>
<dbReference type="InterPro" id="IPR000199">
    <property type="entry name" value="Peptidase_C3A/C3B_picornavir"/>
</dbReference>
<dbReference type="InterPro" id="IPR009003">
    <property type="entry name" value="Peptidase_S1_PA"/>
</dbReference>
<dbReference type="InterPro" id="IPR043504">
    <property type="entry name" value="Peptidase_S1_PA_chymotrypsin"/>
</dbReference>
<dbReference type="InterPro" id="IPR003138">
    <property type="entry name" value="Pico_P1A"/>
</dbReference>
<dbReference type="InterPro" id="IPR036988">
    <property type="entry name" value="Pico_P1A_sf"/>
</dbReference>
<dbReference type="InterPro" id="IPR002527">
    <property type="entry name" value="Pico_P2B"/>
</dbReference>
<dbReference type="InterPro" id="IPR001676">
    <property type="entry name" value="Picornavirus_capsid"/>
</dbReference>
<dbReference type="InterPro" id="IPR043128">
    <property type="entry name" value="Rev_trsase/Diguanyl_cyclase"/>
</dbReference>
<dbReference type="InterPro" id="IPR033703">
    <property type="entry name" value="Rhv-like"/>
</dbReference>
<dbReference type="InterPro" id="IPR001205">
    <property type="entry name" value="RNA-dir_pol_C"/>
</dbReference>
<dbReference type="InterPro" id="IPR007094">
    <property type="entry name" value="RNA-dir_pol_PSvirus"/>
</dbReference>
<dbReference type="InterPro" id="IPR029053">
    <property type="entry name" value="Viral_coat"/>
</dbReference>
<dbReference type="Pfam" id="PF08727">
    <property type="entry name" value="P3A"/>
    <property type="match status" value="1"/>
</dbReference>
<dbReference type="Pfam" id="PF00548">
    <property type="entry name" value="Peptidase_C3"/>
    <property type="match status" value="1"/>
</dbReference>
<dbReference type="Pfam" id="PF02226">
    <property type="entry name" value="Pico_P1A"/>
    <property type="match status" value="1"/>
</dbReference>
<dbReference type="Pfam" id="PF00947">
    <property type="entry name" value="Pico_P2A"/>
    <property type="match status" value="1"/>
</dbReference>
<dbReference type="Pfam" id="PF01552">
    <property type="entry name" value="Pico_P2B"/>
    <property type="match status" value="1"/>
</dbReference>
<dbReference type="Pfam" id="PF00680">
    <property type="entry name" value="RdRP_1"/>
    <property type="match status" value="1"/>
</dbReference>
<dbReference type="Pfam" id="PF00073">
    <property type="entry name" value="Rhv"/>
    <property type="match status" value="3"/>
</dbReference>
<dbReference type="Pfam" id="PF00910">
    <property type="entry name" value="RNA_helicase"/>
    <property type="match status" value="1"/>
</dbReference>
<dbReference type="SMART" id="SM00382">
    <property type="entry name" value="AAA"/>
    <property type="match status" value="1"/>
</dbReference>
<dbReference type="SUPFAM" id="SSF56672">
    <property type="entry name" value="DNA/RNA polymerases"/>
    <property type="match status" value="1"/>
</dbReference>
<dbReference type="SUPFAM" id="SSF52540">
    <property type="entry name" value="P-loop containing nucleoside triphosphate hydrolases"/>
    <property type="match status" value="1"/>
</dbReference>
<dbReference type="SUPFAM" id="SSF88633">
    <property type="entry name" value="Positive stranded ssRNA viruses"/>
    <property type="match status" value="2"/>
</dbReference>
<dbReference type="SUPFAM" id="SSF89043">
    <property type="entry name" value="Soluble domain of poliovirus core protein 3a"/>
    <property type="match status" value="1"/>
</dbReference>
<dbReference type="SUPFAM" id="SSF50494">
    <property type="entry name" value="Trypsin-like serine proteases"/>
    <property type="match status" value="2"/>
</dbReference>
<dbReference type="PROSITE" id="PS51874">
    <property type="entry name" value="PCV_3C_PRO"/>
    <property type="match status" value="1"/>
</dbReference>
<dbReference type="PROSITE" id="PS50507">
    <property type="entry name" value="RDRP_SSRNA_POS"/>
    <property type="match status" value="1"/>
</dbReference>
<dbReference type="PROSITE" id="PS51218">
    <property type="entry name" value="SF3_HELICASE_2"/>
    <property type="match status" value="1"/>
</dbReference>
<feature type="initiator methionine" description="Removed; by host" evidence="2">
    <location>
        <position position="1"/>
    </location>
</feature>
<feature type="chain" id="PRO_0000426371" description="Genome polyprotein">
    <location>
        <begin position="2"/>
        <end position="2196"/>
    </location>
</feature>
<feature type="chain" id="PRO_0000426372" description="P1">
    <location>
        <begin position="2"/>
        <end position="862"/>
    </location>
</feature>
<feature type="chain" id="PRO_0000426373" description="Capsid protein VP0">
    <location>
        <begin position="2"/>
        <end position="331"/>
    </location>
</feature>
<feature type="chain" id="PRO_0000426374" description="Capsid protein VP4">
    <location>
        <begin position="2"/>
        <end position="69"/>
    </location>
</feature>
<feature type="chain" id="PRO_0000426375" description="Capsid protein VP2">
    <location>
        <begin position="70"/>
        <end position="331"/>
    </location>
</feature>
<feature type="chain" id="PRO_0000426376" description="Capsid protein VP3">
    <location>
        <begin position="332"/>
        <end position="570"/>
    </location>
</feature>
<feature type="chain" id="PRO_0000426377" description="Capsid protein VP1">
    <location>
        <begin position="571"/>
        <end position="862"/>
    </location>
</feature>
<feature type="chain" id="PRO_0000426378" description="P2">
    <location>
        <begin position="863"/>
        <end position="1440"/>
    </location>
</feature>
<feature type="chain" id="PRO_0000426379" description="Protease 2A">
    <location>
        <begin position="863"/>
        <end position="1012"/>
    </location>
</feature>
<feature type="chain" id="PRO_0000039664" description="Protein 2B">
    <location>
        <begin position="1013"/>
        <end position="1111"/>
    </location>
</feature>
<feature type="chain" id="PRO_0000039665" description="Protein 2C">
    <location>
        <begin position="1112"/>
        <end position="1440"/>
    </location>
</feature>
<feature type="chain" id="PRO_0000426380" description="P3">
    <location>
        <begin position="1441"/>
        <end position="2196"/>
    </location>
</feature>
<feature type="chain" id="PRO_0000426381" description="Protein 3AB">
    <location>
        <begin position="1441"/>
        <end position="1551"/>
    </location>
</feature>
<feature type="chain" id="PRO_0000039666" description="Protein 3A">
    <location>
        <begin position="1441"/>
        <end position="1529"/>
    </location>
</feature>
<feature type="chain" id="PRO_0000426382" description="Viral protein genome-linked">
    <location>
        <begin position="1530"/>
        <end position="1551"/>
    </location>
</feature>
<feature type="chain" id="PRO_0000426383" description="Protein 3CD">
    <location>
        <begin position="1552"/>
        <end position="2196"/>
    </location>
</feature>
<feature type="chain" id="PRO_0000426384" description="Protease 3C">
    <location>
        <begin position="1552"/>
        <end position="1734"/>
    </location>
</feature>
<feature type="chain" id="PRO_0000426385" description="RNA-directed RNA polymerase">
    <location>
        <begin position="1735"/>
        <end position="2196"/>
    </location>
</feature>
<feature type="topological domain" description="Cytoplasmic" evidence="9">
    <location>
        <begin position="2"/>
        <end position="1506"/>
    </location>
</feature>
<feature type="intramembrane region" evidence="9">
    <location>
        <begin position="1507"/>
        <end position="1522"/>
    </location>
</feature>
<feature type="topological domain" description="Cytoplasmic" evidence="9">
    <location>
        <begin position="1523"/>
        <end position="2196"/>
    </location>
</feature>
<feature type="domain" description="SF3 helicase" evidence="11">
    <location>
        <begin position="1216"/>
        <end position="1372"/>
    </location>
</feature>
<feature type="domain" description="Peptidase C3" evidence="12">
    <location>
        <begin position="1552"/>
        <end position="1730"/>
    </location>
</feature>
<feature type="domain" description="RdRp catalytic" evidence="10">
    <location>
        <begin position="1961"/>
        <end position="2077"/>
    </location>
</feature>
<feature type="zinc finger region" description="C4-type; degenerate" evidence="1">
    <location>
        <begin position="1380"/>
        <end position="1397"/>
    </location>
</feature>
<feature type="region of interest" description="Amphipathic alpha-helix" evidence="9">
    <location>
        <begin position="568"/>
        <end position="584"/>
    </location>
</feature>
<feature type="region of interest" description="Oligomerization" evidence="2">
    <location>
        <begin position="1112"/>
        <end position="1250"/>
    </location>
</feature>
<feature type="region of interest" description="Membrane-binding" evidence="2">
    <location>
        <begin position="1112"/>
        <end position="1184"/>
    </location>
</feature>
<feature type="region of interest" description="RNA-binding" evidence="2">
    <location>
        <begin position="1133"/>
        <end position="1137"/>
    </location>
</feature>
<feature type="region of interest" description="RNA-binding" evidence="2">
    <location>
        <begin position="1424"/>
        <end position="1431"/>
    </location>
</feature>
<feature type="region of interest" description="Oligomerization" evidence="2">
    <location>
        <begin position="1435"/>
        <end position="1440"/>
    </location>
</feature>
<feature type="active site" description="For protease 2A activity" evidence="2">
    <location>
        <position position="883"/>
    </location>
</feature>
<feature type="active site" description="For protease 2A activity" evidence="2">
    <location>
        <position position="901"/>
    </location>
</feature>
<feature type="active site" description="For protease 2A activity" evidence="2">
    <location>
        <position position="972"/>
    </location>
</feature>
<feature type="active site" description="For protease 3C activity" evidence="12">
    <location>
        <position position="1591"/>
    </location>
</feature>
<feature type="active site" description="For protease 3C activity" evidence="12">
    <location>
        <position position="1622"/>
    </location>
</feature>
<feature type="active site" description="For protease 3C activity" evidence="12">
    <location>
        <position position="1698"/>
    </location>
</feature>
<feature type="binding site" evidence="8">
    <location>
        <position position="918"/>
    </location>
    <ligand>
        <name>Zn(2+)</name>
        <dbReference type="ChEBI" id="CHEBI:29105"/>
        <label>1</label>
        <note>structural</note>
    </ligand>
</feature>
<feature type="binding site" evidence="8">
    <location>
        <position position="920"/>
    </location>
    <ligand>
        <name>Zn(2+)</name>
        <dbReference type="ChEBI" id="CHEBI:29105"/>
        <label>1</label>
        <note>structural</note>
    </ligand>
</feature>
<feature type="binding site" evidence="8">
    <location>
        <position position="978"/>
    </location>
    <ligand>
        <name>Zn(2+)</name>
        <dbReference type="ChEBI" id="CHEBI:29105"/>
        <label>1</label>
        <note>structural</note>
    </ligand>
</feature>
<feature type="binding site" evidence="8">
    <location>
        <position position="980"/>
    </location>
    <ligand>
        <name>Zn(2+)</name>
        <dbReference type="ChEBI" id="CHEBI:29105"/>
        <label>1</label>
        <note>structural</note>
    </ligand>
</feature>
<feature type="binding site" evidence="1">
    <location>
        <position position="1380"/>
    </location>
    <ligand>
        <name>Zn(2+)</name>
        <dbReference type="ChEBI" id="CHEBI:29105"/>
        <label>2</label>
    </ligand>
</feature>
<feature type="binding site" evidence="1">
    <location>
        <position position="1392"/>
    </location>
    <ligand>
        <name>Zn(2+)</name>
        <dbReference type="ChEBI" id="CHEBI:29105"/>
        <label>2</label>
    </ligand>
</feature>
<feature type="binding site" evidence="1">
    <location>
        <position position="1397"/>
    </location>
    <ligand>
        <name>Zn(2+)</name>
        <dbReference type="ChEBI" id="CHEBI:29105"/>
        <label>2</label>
    </ligand>
</feature>
<feature type="binding site" evidence="2">
    <location>
        <position position="1967"/>
    </location>
    <ligand>
        <name>Mg(2+)</name>
        <dbReference type="ChEBI" id="CHEBI:18420"/>
        <label>1</label>
        <note>catalytic; for RdRp activity</note>
    </ligand>
</feature>
<feature type="binding site" evidence="2">
    <location>
        <position position="1967"/>
    </location>
    <ligand>
        <name>Mg(2+)</name>
        <dbReference type="ChEBI" id="CHEBI:18420"/>
        <label>2</label>
        <note>catalytic; for RdRp activity</note>
    </ligand>
</feature>
<feature type="binding site" evidence="2">
    <location>
        <position position="2063"/>
    </location>
    <ligand>
        <name>Mg(2+)</name>
        <dbReference type="ChEBI" id="CHEBI:18420"/>
        <label>1</label>
        <note>catalytic; for RdRp activity</note>
    </ligand>
</feature>
<feature type="binding site" evidence="2">
    <location>
        <position position="2063"/>
    </location>
    <ligand>
        <name>Mg(2+)</name>
        <dbReference type="ChEBI" id="CHEBI:18420"/>
        <label>2</label>
        <note>catalytic; for RdRp activity</note>
    </ligand>
</feature>
<feature type="site" description="Cleavage; by autolysis" evidence="2">
    <location>
        <begin position="69"/>
        <end position="70"/>
    </location>
</feature>
<feature type="site" description="Cleavage; by protease 3C" evidence="3">
    <location>
        <begin position="331"/>
        <end position="332"/>
    </location>
</feature>
<feature type="site" description="Cleavage; by autolysis" evidence="3">
    <location>
        <begin position="862"/>
        <end position="863"/>
    </location>
</feature>
<feature type="site" description="Cleavage; by protease 3C" evidence="3">
    <location>
        <begin position="1012"/>
        <end position="1013"/>
    </location>
</feature>
<feature type="site" description="Cleavage; by protease 3C" evidence="3">
    <location>
        <begin position="1111"/>
        <end position="1112"/>
    </location>
</feature>
<feature type="site" description="Involved in the interaction with host RTN3" evidence="7">
    <location>
        <position position="1136"/>
    </location>
</feature>
<feature type="site" description="Cleavage; by protease 3C" evidence="3">
    <location>
        <begin position="1440"/>
        <end position="1441"/>
    </location>
</feature>
<feature type="site" description="Cleavage; by protease 3C" evidence="3">
    <location>
        <begin position="1529"/>
        <end position="1530"/>
    </location>
</feature>
<feature type="site" description="Cleavage; by protease 3C" evidence="3">
    <location>
        <begin position="1551"/>
        <end position="1552"/>
    </location>
</feature>
<feature type="site" description="Cleavage; by protease 3C" evidence="3">
    <location>
        <begin position="1734"/>
        <end position="1735"/>
    </location>
</feature>
<feature type="modified residue" description="O-(5'-phospho-RNA)-tyrosine" evidence="2">
    <location>
        <position position="1532"/>
    </location>
</feature>
<feature type="lipid moiety-binding region" description="N-myristoyl glycine; by host" evidence="2">
    <location>
        <position position="2"/>
    </location>
</feature>
<organism>
    <name type="scientific">Echovirus 5 (strain Noyce)</name>
    <dbReference type="NCBI Taxonomy" id="176283"/>
    <lineage>
        <taxon>Viruses</taxon>
        <taxon>Riboviria</taxon>
        <taxon>Orthornavirae</taxon>
        <taxon>Pisuviricota</taxon>
        <taxon>Pisoniviricetes</taxon>
        <taxon>Picornavirales</taxon>
        <taxon>Picornaviridae</taxon>
        <taxon>Ensavirinae</taxon>
        <taxon>Enterovirus</taxon>
        <taxon>Enterovirus B</taxon>
    </lineage>
</organism>